<accession>Q6AP62</accession>
<name>RS17_DESPS</name>
<sequence>MSENNTSRKTRTGSVVSDRMEKSVVVRVERKVRHKLYGKFMKTSVKYLADDPENQCNIGDVVLIEECRPLSKRKRWRVKTILEQAV</sequence>
<feature type="chain" id="PRO_0000233472" description="Small ribosomal subunit protein uS17">
    <location>
        <begin position="1"/>
        <end position="86"/>
    </location>
</feature>
<dbReference type="EMBL" id="CR522870">
    <property type="protein sequence ID" value="CAG35862.1"/>
    <property type="molecule type" value="Genomic_DNA"/>
</dbReference>
<dbReference type="RefSeq" id="WP_011188376.1">
    <property type="nucleotide sequence ID" value="NC_006138.1"/>
</dbReference>
<dbReference type="SMR" id="Q6AP62"/>
<dbReference type="STRING" id="177439.DP1133"/>
<dbReference type="KEGG" id="dps:DP1133"/>
<dbReference type="eggNOG" id="COG0186">
    <property type="taxonomic scope" value="Bacteria"/>
</dbReference>
<dbReference type="HOGENOM" id="CLU_073626_1_1_7"/>
<dbReference type="OrthoDB" id="9811714at2"/>
<dbReference type="Proteomes" id="UP000000602">
    <property type="component" value="Chromosome"/>
</dbReference>
<dbReference type="GO" id="GO:0022627">
    <property type="term" value="C:cytosolic small ribosomal subunit"/>
    <property type="evidence" value="ECO:0007669"/>
    <property type="project" value="TreeGrafter"/>
</dbReference>
<dbReference type="GO" id="GO:0019843">
    <property type="term" value="F:rRNA binding"/>
    <property type="evidence" value="ECO:0007669"/>
    <property type="project" value="UniProtKB-UniRule"/>
</dbReference>
<dbReference type="GO" id="GO:0003735">
    <property type="term" value="F:structural constituent of ribosome"/>
    <property type="evidence" value="ECO:0007669"/>
    <property type="project" value="InterPro"/>
</dbReference>
<dbReference type="GO" id="GO:0006412">
    <property type="term" value="P:translation"/>
    <property type="evidence" value="ECO:0007669"/>
    <property type="project" value="UniProtKB-UniRule"/>
</dbReference>
<dbReference type="CDD" id="cd00364">
    <property type="entry name" value="Ribosomal_uS17"/>
    <property type="match status" value="1"/>
</dbReference>
<dbReference type="Gene3D" id="2.40.50.140">
    <property type="entry name" value="Nucleic acid-binding proteins"/>
    <property type="match status" value="1"/>
</dbReference>
<dbReference type="HAMAP" id="MF_01345_B">
    <property type="entry name" value="Ribosomal_uS17_B"/>
    <property type="match status" value="1"/>
</dbReference>
<dbReference type="InterPro" id="IPR012340">
    <property type="entry name" value="NA-bd_OB-fold"/>
</dbReference>
<dbReference type="InterPro" id="IPR000266">
    <property type="entry name" value="Ribosomal_uS17"/>
</dbReference>
<dbReference type="InterPro" id="IPR019984">
    <property type="entry name" value="Ribosomal_uS17_bact/chlr"/>
</dbReference>
<dbReference type="InterPro" id="IPR019979">
    <property type="entry name" value="Ribosomal_uS17_CS"/>
</dbReference>
<dbReference type="NCBIfam" id="NF004123">
    <property type="entry name" value="PRK05610.1"/>
    <property type="match status" value="1"/>
</dbReference>
<dbReference type="NCBIfam" id="TIGR03635">
    <property type="entry name" value="uS17_bact"/>
    <property type="match status" value="1"/>
</dbReference>
<dbReference type="PANTHER" id="PTHR10744">
    <property type="entry name" value="40S RIBOSOMAL PROTEIN S11 FAMILY MEMBER"/>
    <property type="match status" value="1"/>
</dbReference>
<dbReference type="PANTHER" id="PTHR10744:SF1">
    <property type="entry name" value="SMALL RIBOSOMAL SUBUNIT PROTEIN US17M"/>
    <property type="match status" value="1"/>
</dbReference>
<dbReference type="Pfam" id="PF00366">
    <property type="entry name" value="Ribosomal_S17"/>
    <property type="match status" value="1"/>
</dbReference>
<dbReference type="PRINTS" id="PR00973">
    <property type="entry name" value="RIBOSOMALS17"/>
</dbReference>
<dbReference type="SUPFAM" id="SSF50249">
    <property type="entry name" value="Nucleic acid-binding proteins"/>
    <property type="match status" value="1"/>
</dbReference>
<dbReference type="PROSITE" id="PS00056">
    <property type="entry name" value="RIBOSOMAL_S17"/>
    <property type="match status" value="1"/>
</dbReference>
<comment type="function">
    <text evidence="1">One of the primary rRNA binding proteins, it binds specifically to the 5'-end of 16S ribosomal RNA.</text>
</comment>
<comment type="subunit">
    <text evidence="1">Part of the 30S ribosomal subunit.</text>
</comment>
<comment type="similarity">
    <text evidence="1">Belongs to the universal ribosomal protein uS17 family.</text>
</comment>
<evidence type="ECO:0000255" key="1">
    <source>
        <dbReference type="HAMAP-Rule" id="MF_01345"/>
    </source>
</evidence>
<evidence type="ECO:0000305" key="2"/>
<organism>
    <name type="scientific">Desulfotalea psychrophila (strain LSv54 / DSM 12343)</name>
    <dbReference type="NCBI Taxonomy" id="177439"/>
    <lineage>
        <taxon>Bacteria</taxon>
        <taxon>Pseudomonadati</taxon>
        <taxon>Thermodesulfobacteriota</taxon>
        <taxon>Desulfobulbia</taxon>
        <taxon>Desulfobulbales</taxon>
        <taxon>Desulfocapsaceae</taxon>
        <taxon>Desulfotalea</taxon>
    </lineage>
</organism>
<keyword id="KW-1185">Reference proteome</keyword>
<keyword id="KW-0687">Ribonucleoprotein</keyword>
<keyword id="KW-0689">Ribosomal protein</keyword>
<keyword id="KW-0694">RNA-binding</keyword>
<keyword id="KW-0699">rRNA-binding</keyword>
<gene>
    <name evidence="1" type="primary">rpsQ</name>
    <name type="ordered locus">DP1133</name>
</gene>
<reference key="1">
    <citation type="journal article" date="2004" name="Environ. Microbiol.">
        <title>The genome of Desulfotalea psychrophila, a sulfate-reducing bacterium from permanently cold Arctic sediments.</title>
        <authorList>
            <person name="Rabus R."/>
            <person name="Ruepp A."/>
            <person name="Frickey T."/>
            <person name="Rattei T."/>
            <person name="Fartmann B."/>
            <person name="Stark M."/>
            <person name="Bauer M."/>
            <person name="Zibat A."/>
            <person name="Lombardot T."/>
            <person name="Becker I."/>
            <person name="Amann J."/>
            <person name="Gellner K."/>
            <person name="Teeling H."/>
            <person name="Leuschner W.D."/>
            <person name="Gloeckner F.-O."/>
            <person name="Lupas A.N."/>
            <person name="Amann R."/>
            <person name="Klenk H.-P."/>
        </authorList>
    </citation>
    <scope>NUCLEOTIDE SEQUENCE [LARGE SCALE GENOMIC DNA]</scope>
    <source>
        <strain>DSM 12343 / LSv54</strain>
    </source>
</reference>
<proteinExistence type="inferred from homology"/>
<protein>
    <recommendedName>
        <fullName evidence="1">Small ribosomal subunit protein uS17</fullName>
    </recommendedName>
    <alternativeName>
        <fullName evidence="2">30S ribosomal protein S17</fullName>
    </alternativeName>
</protein>